<name>NGF_XIPMA</name>
<gene>
    <name type="primary">ngf</name>
    <name type="synonym">ngfb</name>
</gene>
<evidence type="ECO:0000250" key="1"/>
<evidence type="ECO:0000255" key="2"/>
<evidence type="ECO:0000256" key="3">
    <source>
        <dbReference type="SAM" id="MobiDB-lite"/>
    </source>
</evidence>
<evidence type="ECO:0000305" key="4"/>
<reference key="1">
    <citation type="journal article" date="1992" name="J. Neurochem.">
        <title>Brain-derived neurotrophic factor is more highly conserved in structure and function than nerve growth factor during vertebrate evolution.</title>
        <authorList>
            <person name="Gotz R."/>
            <person name="Raulf F."/>
            <person name="Schartl M."/>
        </authorList>
    </citation>
    <scope>NUCLEOTIDE SEQUENCE [GENOMIC DNA]</scope>
</reference>
<accession>P34129</accession>
<dbReference type="EMBL" id="X59941">
    <property type="protein sequence ID" value="CAA42566.1"/>
    <property type="molecule type" value="Genomic_DNA"/>
</dbReference>
<dbReference type="PIR" id="I51709">
    <property type="entry name" value="I51709"/>
</dbReference>
<dbReference type="RefSeq" id="XP_005813808.1">
    <property type="nucleotide sequence ID" value="XM_005813751.1"/>
</dbReference>
<dbReference type="SMR" id="P34129"/>
<dbReference type="FunCoup" id="P34129">
    <property type="interactions" value="1009"/>
</dbReference>
<dbReference type="STRING" id="8083.ENSXMAP00000020404"/>
<dbReference type="Ensembl" id="ENSXMAT00000020432.2">
    <property type="protein sequence ID" value="ENSXMAP00000020404.1"/>
    <property type="gene ID" value="ENSXMAG00000020357.2"/>
</dbReference>
<dbReference type="eggNOG" id="ENOG502RYPU">
    <property type="taxonomic scope" value="Eukaryota"/>
</dbReference>
<dbReference type="GeneTree" id="ENSGT00390000007725"/>
<dbReference type="HOGENOM" id="CLU_059942_2_0_1"/>
<dbReference type="InParanoid" id="P34129"/>
<dbReference type="OMA" id="ETTCHSA"/>
<dbReference type="OrthoDB" id="6491780at2759"/>
<dbReference type="Proteomes" id="UP000002852">
    <property type="component" value="Unassembled WGS sequence"/>
</dbReference>
<dbReference type="GO" id="GO:0030424">
    <property type="term" value="C:axon"/>
    <property type="evidence" value="ECO:0007669"/>
    <property type="project" value="TreeGrafter"/>
</dbReference>
<dbReference type="GO" id="GO:0030425">
    <property type="term" value="C:dendrite"/>
    <property type="evidence" value="ECO:0007669"/>
    <property type="project" value="TreeGrafter"/>
</dbReference>
<dbReference type="GO" id="GO:0005615">
    <property type="term" value="C:extracellular space"/>
    <property type="evidence" value="ECO:0007669"/>
    <property type="project" value="TreeGrafter"/>
</dbReference>
<dbReference type="GO" id="GO:0008021">
    <property type="term" value="C:synaptic vesicle"/>
    <property type="evidence" value="ECO:0007669"/>
    <property type="project" value="TreeGrafter"/>
</dbReference>
<dbReference type="GO" id="GO:0008083">
    <property type="term" value="F:growth factor activity"/>
    <property type="evidence" value="ECO:0007669"/>
    <property type="project" value="UniProtKB-KW"/>
</dbReference>
<dbReference type="GO" id="GO:0005163">
    <property type="term" value="F:nerve growth factor receptor binding"/>
    <property type="evidence" value="ECO:0007669"/>
    <property type="project" value="TreeGrafter"/>
</dbReference>
<dbReference type="GO" id="GO:0007169">
    <property type="term" value="P:cell surface receptor protein tyrosine kinase signaling pathway"/>
    <property type="evidence" value="ECO:0007669"/>
    <property type="project" value="TreeGrafter"/>
</dbReference>
<dbReference type="GO" id="GO:0050804">
    <property type="term" value="P:modulation of chemical synaptic transmission"/>
    <property type="evidence" value="ECO:0007669"/>
    <property type="project" value="TreeGrafter"/>
</dbReference>
<dbReference type="GO" id="GO:0043524">
    <property type="term" value="P:negative regulation of neuron apoptotic process"/>
    <property type="evidence" value="ECO:0007669"/>
    <property type="project" value="TreeGrafter"/>
</dbReference>
<dbReference type="GO" id="GO:0021675">
    <property type="term" value="P:nerve development"/>
    <property type="evidence" value="ECO:0007669"/>
    <property type="project" value="TreeGrafter"/>
</dbReference>
<dbReference type="GO" id="GO:0038180">
    <property type="term" value="P:nerve growth factor signaling pathway"/>
    <property type="evidence" value="ECO:0007669"/>
    <property type="project" value="TreeGrafter"/>
</dbReference>
<dbReference type="GO" id="GO:0048812">
    <property type="term" value="P:neuron projection morphogenesis"/>
    <property type="evidence" value="ECO:0007669"/>
    <property type="project" value="TreeGrafter"/>
</dbReference>
<dbReference type="FunFam" id="2.10.90.10:FF:000002">
    <property type="entry name" value="Brain-derived neurotrophic factor"/>
    <property type="match status" value="1"/>
</dbReference>
<dbReference type="Gene3D" id="2.10.90.10">
    <property type="entry name" value="Cystine-knot cytokines"/>
    <property type="match status" value="1"/>
</dbReference>
<dbReference type="InterPro" id="IPR029034">
    <property type="entry name" value="Cystine-knot_cytokine"/>
</dbReference>
<dbReference type="InterPro" id="IPR020408">
    <property type="entry name" value="Nerve_growth_factor-like"/>
</dbReference>
<dbReference type="InterPro" id="IPR002072">
    <property type="entry name" value="Nerve_growth_factor-rel"/>
</dbReference>
<dbReference type="InterPro" id="IPR019846">
    <property type="entry name" value="Nerve_growth_factor_CS"/>
</dbReference>
<dbReference type="PANTHER" id="PTHR11589:SF10">
    <property type="entry name" value="BETA-NERVE GROWTH FACTOR"/>
    <property type="match status" value="1"/>
</dbReference>
<dbReference type="PANTHER" id="PTHR11589">
    <property type="entry name" value="NERVE GROWTH FACTOR NGF -RELATED"/>
    <property type="match status" value="1"/>
</dbReference>
<dbReference type="Pfam" id="PF00243">
    <property type="entry name" value="NGF"/>
    <property type="match status" value="1"/>
</dbReference>
<dbReference type="PIRSF" id="PIRSF001789">
    <property type="entry name" value="NGF"/>
    <property type="match status" value="1"/>
</dbReference>
<dbReference type="PRINTS" id="PR00268">
    <property type="entry name" value="NGF"/>
</dbReference>
<dbReference type="SMART" id="SM00140">
    <property type="entry name" value="NGF"/>
    <property type="match status" value="1"/>
</dbReference>
<dbReference type="SUPFAM" id="SSF57501">
    <property type="entry name" value="Cystine-knot cytokines"/>
    <property type="match status" value="1"/>
</dbReference>
<dbReference type="PROSITE" id="PS00248">
    <property type="entry name" value="NGF_1"/>
    <property type="match status" value="1"/>
</dbReference>
<dbReference type="PROSITE" id="PS50270">
    <property type="entry name" value="NGF_2"/>
    <property type="match status" value="1"/>
</dbReference>
<proteinExistence type="inferred from homology"/>
<keyword id="KW-0165">Cleavage on pair of basic residues</keyword>
<keyword id="KW-1015">Disulfide bond</keyword>
<keyword id="KW-0339">Growth factor</keyword>
<keyword id="KW-1185">Reference proteome</keyword>
<keyword id="KW-0964">Secreted</keyword>
<keyword id="KW-0732">Signal</keyword>
<comment type="function">
    <text>Nerve growth factor is important for the development and maintenance of the sympathetic and sensory nervous systems. It stimulates division and differentiation of sympathetic and embryonic sensory neurons as well as basal forebrain cholinergic neurons in the brain.</text>
</comment>
<comment type="subunit">
    <text>Homodimer.</text>
</comment>
<comment type="subcellular location">
    <subcellularLocation>
        <location>Secreted</location>
    </subcellularLocation>
</comment>
<comment type="similarity">
    <text evidence="4">Belongs to the NGF-beta family.</text>
</comment>
<feature type="signal peptide" evidence="2">
    <location>
        <begin position="1"/>
        <end position="30"/>
    </location>
</feature>
<feature type="propeptide" id="PRO_0000019621">
    <location>
        <begin position="31"/>
        <end position="79"/>
    </location>
</feature>
<feature type="chain" id="PRO_0000019622" description="Nerve growth factor">
    <location>
        <begin position="80"/>
        <end position="194"/>
    </location>
</feature>
<feature type="region of interest" description="Disordered" evidence="3">
    <location>
        <begin position="56"/>
        <end position="81"/>
    </location>
</feature>
<feature type="disulfide bond" evidence="1">
    <location>
        <begin position="90"/>
        <end position="155"/>
    </location>
</feature>
<feature type="disulfide bond" evidence="1">
    <location>
        <begin position="133"/>
        <end position="183"/>
    </location>
</feature>
<feature type="disulfide bond" evidence="1">
    <location>
        <begin position="143"/>
        <end position="185"/>
    </location>
</feature>
<organism>
    <name type="scientific">Xiphophorus maculatus</name>
    <name type="common">Southern platyfish</name>
    <name type="synonym">Platypoecilus maculatus</name>
    <dbReference type="NCBI Taxonomy" id="8083"/>
    <lineage>
        <taxon>Eukaryota</taxon>
        <taxon>Metazoa</taxon>
        <taxon>Chordata</taxon>
        <taxon>Craniata</taxon>
        <taxon>Vertebrata</taxon>
        <taxon>Euteleostomi</taxon>
        <taxon>Actinopterygii</taxon>
        <taxon>Neopterygii</taxon>
        <taxon>Teleostei</taxon>
        <taxon>Neoteleostei</taxon>
        <taxon>Acanthomorphata</taxon>
        <taxon>Ovalentaria</taxon>
        <taxon>Atherinomorphae</taxon>
        <taxon>Cyprinodontiformes</taxon>
        <taxon>Poeciliidae</taxon>
        <taxon>Poeciliinae</taxon>
        <taxon>Xiphophorus</taxon>
    </lineage>
</organism>
<protein>
    <recommendedName>
        <fullName>Nerve growth factor</fullName>
        <shortName>NGF</shortName>
    </recommendedName>
</protein>
<sequence>MRSSMLVLFLIFSAQAVAPIIGVLCSVTTAQQDHPTSIPTVDPKLFNKRRHLSPRVLFSSQPPDAEPAGGQGVSRRTRRQPQHRGVYSVCESVSVWVGNKTKATDISGKEVTVLPYVNINNVKKKQYFFETTCHSPPSGGSRCLGIDARHWNSHCTNSHTFVRALTSSENQVAWRLIRINVACVCVLSRKSWQH</sequence>